<organism>
    <name type="scientific">Acetivibrio thermocellus (strain ATCC 27405 / DSM 1237 / JCM 9322 / NBRC 103400 / NCIMB 10682 / NRRL B-4536 / VPI 7372)</name>
    <name type="common">Clostridium thermocellum</name>
    <dbReference type="NCBI Taxonomy" id="203119"/>
    <lineage>
        <taxon>Bacteria</taxon>
        <taxon>Bacillati</taxon>
        <taxon>Bacillota</taxon>
        <taxon>Clostridia</taxon>
        <taxon>Eubacteriales</taxon>
        <taxon>Oscillospiraceae</taxon>
        <taxon>Acetivibrio</taxon>
    </lineage>
</organism>
<reference key="1">
    <citation type="submission" date="2007-02" db="EMBL/GenBank/DDBJ databases">
        <title>Complete sequence of Clostridium thermocellum ATCC 27405.</title>
        <authorList>
            <consortium name="US DOE Joint Genome Institute"/>
            <person name="Copeland A."/>
            <person name="Lucas S."/>
            <person name="Lapidus A."/>
            <person name="Barry K."/>
            <person name="Detter J.C."/>
            <person name="Glavina del Rio T."/>
            <person name="Hammon N."/>
            <person name="Israni S."/>
            <person name="Dalin E."/>
            <person name="Tice H."/>
            <person name="Pitluck S."/>
            <person name="Chertkov O."/>
            <person name="Brettin T."/>
            <person name="Bruce D."/>
            <person name="Han C."/>
            <person name="Tapia R."/>
            <person name="Gilna P."/>
            <person name="Schmutz J."/>
            <person name="Larimer F."/>
            <person name="Land M."/>
            <person name="Hauser L."/>
            <person name="Kyrpides N."/>
            <person name="Mikhailova N."/>
            <person name="Wu J.H.D."/>
            <person name="Newcomb M."/>
            <person name="Richardson P."/>
        </authorList>
    </citation>
    <scope>NUCLEOTIDE SEQUENCE [LARGE SCALE GENOMIC DNA]</scope>
    <source>
        <strain>ATCC 27405 / DSM 1237 / JCM 9322 / NBRC 103400 / NCIMB 10682 / NRRL B-4536 / VPI 7372</strain>
    </source>
</reference>
<reference key="2">
    <citation type="journal article" date="2010" name="FEMS Microbiol. Lett.">
        <title>The unique set of putative membrane-associated anti-sigma factors in Clostridium thermocellum suggests a novel extracellular carbohydrate-sensing mechanism involved in gene regulation.</title>
        <authorList>
            <person name="Kahel-Raifer H."/>
            <person name="Jindou S."/>
            <person name="Bahari L."/>
            <person name="Nataf Y."/>
            <person name="Shoham Y."/>
            <person name="Bayer E.A."/>
            <person name="Borovok I."/>
            <person name="Lamed R."/>
        </authorList>
    </citation>
    <scope>NOMENCLATURE</scope>
    <source>
        <strain>ATCC 27405 / DSM 1237 / JCM 9322 / NBRC 103400 / NCIMB 10682 / NRRL B-4536 / VPI 7372</strain>
    </source>
</reference>
<gene>
    <name evidence="4" type="primary">rsgI9</name>
    <name evidence="6" type="ordered locus">Cthe_0260</name>
</gene>
<proteinExistence type="evidence at protein level"/>
<keyword id="KW-0002">3D-structure</keyword>
<keyword id="KW-1003">Cell membrane</keyword>
<keyword id="KW-0175">Coiled coil</keyword>
<keyword id="KW-0472">Membrane</keyword>
<keyword id="KW-1185">Reference proteome</keyword>
<keyword id="KW-0812">Transmembrane</keyword>
<keyword id="KW-1133">Transmembrane helix</keyword>
<accession>A3DC20</accession>
<feature type="chain" id="PRO_0000436552" description="Anti-sigma-I factor RsgI9">
    <location>
        <begin position="1"/>
        <end position="707"/>
    </location>
</feature>
<feature type="topological domain" description="Cytoplasmic" evidence="5">
    <location>
        <begin position="1"/>
        <end position="149"/>
    </location>
</feature>
<feature type="transmembrane region" description="Helical" evidence="1">
    <location>
        <begin position="150"/>
        <end position="172"/>
    </location>
</feature>
<feature type="topological domain" description="Extracellular" evidence="5">
    <location>
        <begin position="173"/>
        <end position="707"/>
    </location>
</feature>
<feature type="domain" description="RsgI N-terminal anti-sigma" evidence="2">
    <location>
        <begin position="3"/>
        <end position="50"/>
    </location>
</feature>
<feature type="region of interest" description="Disordered" evidence="3">
    <location>
        <begin position="345"/>
        <end position="392"/>
    </location>
</feature>
<feature type="coiled-coil region" evidence="1">
    <location>
        <begin position="256"/>
        <end position="283"/>
    </location>
</feature>
<feature type="compositionally biased region" description="Pro residues" evidence="3">
    <location>
        <begin position="353"/>
        <end position="367"/>
    </location>
</feature>
<feature type="compositionally biased region" description="Low complexity" evidence="3">
    <location>
        <begin position="368"/>
        <end position="379"/>
    </location>
</feature>
<feature type="helix" evidence="7">
    <location>
        <begin position="393"/>
        <end position="400"/>
    </location>
</feature>
<feature type="strand" evidence="7">
    <location>
        <begin position="403"/>
        <end position="409"/>
    </location>
</feature>
<feature type="strand" evidence="7">
    <location>
        <begin position="415"/>
        <end position="425"/>
    </location>
</feature>
<feature type="strand" evidence="7">
    <location>
        <begin position="428"/>
        <end position="431"/>
    </location>
</feature>
<feature type="helix" evidence="7">
    <location>
        <begin position="433"/>
        <end position="435"/>
    </location>
</feature>
<feature type="turn" evidence="7">
    <location>
        <begin position="436"/>
        <end position="438"/>
    </location>
</feature>
<feature type="strand" evidence="7">
    <location>
        <begin position="440"/>
        <end position="445"/>
    </location>
</feature>
<feature type="strand" evidence="7">
    <location>
        <begin position="451"/>
        <end position="461"/>
    </location>
</feature>
<feature type="turn" evidence="7">
    <location>
        <begin position="462"/>
        <end position="465"/>
    </location>
</feature>
<feature type="strand" evidence="7">
    <location>
        <begin position="466"/>
        <end position="473"/>
    </location>
</feature>
<feature type="helix" evidence="7">
    <location>
        <begin position="485"/>
        <end position="487"/>
    </location>
</feature>
<feature type="strand" evidence="7">
    <location>
        <begin position="493"/>
        <end position="499"/>
    </location>
</feature>
<feature type="strand" evidence="7">
    <location>
        <begin position="505"/>
        <end position="515"/>
    </location>
</feature>
<feature type="strand" evidence="7">
    <location>
        <begin position="520"/>
        <end position="522"/>
    </location>
</feature>
<feature type="strand" evidence="7">
    <location>
        <begin position="524"/>
        <end position="528"/>
    </location>
</feature>
<feature type="helix" evidence="7">
    <location>
        <begin position="532"/>
        <end position="534"/>
    </location>
</feature>
<feature type="strand" evidence="7">
    <location>
        <begin position="538"/>
        <end position="540"/>
    </location>
</feature>
<feature type="strand" evidence="7">
    <location>
        <begin position="546"/>
        <end position="550"/>
    </location>
</feature>
<feature type="strand" evidence="7">
    <location>
        <begin position="554"/>
        <end position="556"/>
    </location>
</feature>
<feature type="strand" evidence="7">
    <location>
        <begin position="561"/>
        <end position="564"/>
    </location>
</feature>
<feature type="helix" evidence="7">
    <location>
        <begin position="566"/>
        <end position="575"/>
    </location>
</feature>
<feature type="helix" evidence="7">
    <location>
        <begin position="580"/>
        <end position="582"/>
    </location>
</feature>
<feature type="strand" evidence="7">
    <location>
        <begin position="586"/>
        <end position="588"/>
    </location>
</feature>
<feature type="helix" evidence="7">
    <location>
        <begin position="596"/>
        <end position="610"/>
    </location>
</feature>
<feature type="helix" evidence="7">
    <location>
        <begin position="614"/>
        <end position="619"/>
    </location>
</feature>
<feature type="helix" evidence="7">
    <location>
        <begin position="623"/>
        <end position="625"/>
    </location>
</feature>
<feature type="helix" evidence="7">
    <location>
        <begin position="628"/>
        <end position="640"/>
    </location>
</feature>
<feature type="strand" evidence="7">
    <location>
        <begin position="642"/>
        <end position="655"/>
    </location>
</feature>
<feature type="strand" evidence="7">
    <location>
        <begin position="657"/>
        <end position="674"/>
    </location>
</feature>
<feature type="strand" evidence="7">
    <location>
        <begin position="679"/>
        <end position="690"/>
    </location>
</feature>
<feature type="strand" evidence="7">
    <location>
        <begin position="693"/>
        <end position="702"/>
    </location>
</feature>
<dbReference type="EMBL" id="CP000568">
    <property type="protein sequence ID" value="ABN51499.1"/>
    <property type="molecule type" value="Genomic_DNA"/>
</dbReference>
<dbReference type="RefSeq" id="WP_011837788.1">
    <property type="nucleotide sequence ID" value="NC_009012.1"/>
</dbReference>
<dbReference type="PDB" id="7SJY">
    <property type="method" value="X-ray"/>
    <property type="resolution" value="2.00 A"/>
    <property type="chains" value="A/B=387-702"/>
</dbReference>
<dbReference type="PDBsum" id="7SJY"/>
<dbReference type="SMR" id="A3DC20"/>
<dbReference type="STRING" id="203119.Cthe_0260"/>
<dbReference type="GeneID" id="35803827"/>
<dbReference type="KEGG" id="cth:Cthe_0260"/>
<dbReference type="eggNOG" id="COG0265">
    <property type="taxonomic scope" value="Bacteria"/>
</dbReference>
<dbReference type="HOGENOM" id="CLU_390141_0_0_9"/>
<dbReference type="OrthoDB" id="189537at2"/>
<dbReference type="Proteomes" id="UP000002145">
    <property type="component" value="Chromosome"/>
</dbReference>
<dbReference type="GO" id="GO:0005886">
    <property type="term" value="C:plasma membrane"/>
    <property type="evidence" value="ECO:0007669"/>
    <property type="project" value="UniProtKB-SubCell"/>
</dbReference>
<dbReference type="GO" id="GO:0004252">
    <property type="term" value="F:serine-type endopeptidase activity"/>
    <property type="evidence" value="ECO:0007669"/>
    <property type="project" value="InterPro"/>
</dbReference>
<dbReference type="GO" id="GO:0006508">
    <property type="term" value="P:proteolysis"/>
    <property type="evidence" value="ECO:0007669"/>
    <property type="project" value="InterPro"/>
</dbReference>
<dbReference type="Gene3D" id="2.40.10.120">
    <property type="match status" value="1"/>
</dbReference>
<dbReference type="InterPro" id="IPR024449">
    <property type="entry name" value="Anti-sigma_RsgI_N"/>
</dbReference>
<dbReference type="InterPro" id="IPR009003">
    <property type="entry name" value="Peptidase_S1_PA"/>
</dbReference>
<dbReference type="InterPro" id="IPR001940">
    <property type="entry name" value="Peptidase_S1C"/>
</dbReference>
<dbReference type="InterPro" id="IPR055431">
    <property type="entry name" value="RsgI_M"/>
</dbReference>
<dbReference type="PANTHER" id="PTHR43019:SF23">
    <property type="entry name" value="PROTEASE DO-LIKE 5, CHLOROPLASTIC"/>
    <property type="match status" value="1"/>
</dbReference>
<dbReference type="PANTHER" id="PTHR43019">
    <property type="entry name" value="SERINE ENDOPROTEASE DEGS"/>
    <property type="match status" value="1"/>
</dbReference>
<dbReference type="Pfam" id="PF23750">
    <property type="entry name" value="RsgI_M"/>
    <property type="match status" value="1"/>
</dbReference>
<dbReference type="Pfam" id="PF12791">
    <property type="entry name" value="RsgI_N"/>
    <property type="match status" value="1"/>
</dbReference>
<dbReference type="Pfam" id="PF13365">
    <property type="entry name" value="Trypsin_2"/>
    <property type="match status" value="1"/>
</dbReference>
<dbReference type="PRINTS" id="PR00834">
    <property type="entry name" value="PROTEASES2C"/>
</dbReference>
<dbReference type="SUPFAM" id="SSF50494">
    <property type="entry name" value="Trypsin-like serine proteases"/>
    <property type="match status" value="1"/>
</dbReference>
<dbReference type="PROSITE" id="PS51849">
    <property type="entry name" value="RSGI_N"/>
    <property type="match status" value="1"/>
</dbReference>
<name>RSGI9_ACET2</name>
<protein>
    <recommendedName>
        <fullName evidence="5">Anti-sigma-I factor RsgI9</fullName>
    </recommendedName>
</protein>
<evidence type="ECO:0000255" key="1"/>
<evidence type="ECO:0000255" key="2">
    <source>
        <dbReference type="PROSITE-ProRule" id="PRU01196"/>
    </source>
</evidence>
<evidence type="ECO:0000256" key="3">
    <source>
        <dbReference type="SAM" id="MobiDB-lite"/>
    </source>
</evidence>
<evidence type="ECO:0000303" key="4">
    <source>
    </source>
</evidence>
<evidence type="ECO:0000305" key="5"/>
<evidence type="ECO:0000312" key="6">
    <source>
        <dbReference type="EMBL" id="ABN51499.1"/>
    </source>
</evidence>
<evidence type="ECO:0007829" key="7">
    <source>
        <dbReference type="PDB" id="7SJY"/>
    </source>
</evidence>
<comment type="subcellular location">
    <subcellularLocation>
        <location evidence="5">Cell membrane</location>
        <topology evidence="1">Single-pass membrane protein</topology>
    </subcellularLocation>
</comment>
<sequence length="707" mass="78800">MKITGVIVRIHKDRAIIRTDDNRLLAVKRHNDMMVGQIVSFDANEVHKVESKKYKYAASGKRIEKVQKTPKIKNFSRINNIKEFSRVDDIKNFSRVAATKETSQDSPQESKVENFSRVVDFSRVMNFSRVSNSKKNEIKNFSRISNIKNFSRIASIAAAFVLIFLFGRNVMLNNSSDSEYAYVSVDVNPSVEFTINSKHKVIVTSAINQDASEVLDGLELKEKDLKSALVMVLEKAESLGYISDDKNYVLVSMALNDKNKKTRDKREEKIDELKETIEQGIEALDNDTIVHRTVTVDLEERNKALENELSMGRYYLYLEAKEKGMDITIDEVKSSKISDLIEKIEDNTELAPTPTPVPPETPEPTPTPTASEATPSNSPVESKSPEAVPELGSREIEILGESVVLVTAYDENRKVVSQGSGFAVGTGLFATNYHLVKDGVVVKITAGDGKVYDVDGIVKYDKAKDLALLKTRVETGVNPLKLGTKKSLTKGSRIVAIGKANGAKNTVTKGSIKSLKVDGLTDAIELSASISKESTGGPVFDMKGNVVGITAYGISKQNVNAVIPADYVADWVKELSKHSFGNIRIVRKTLVFDSDFEFNFVVYKIIRALENEDAATYFGCMTDELYKDETRKNLEVLFTTYDLAYNIESINVVSKSEEQAKVSYVYTINKEAGPNFKNYRIIGECSLIKVDGTWKINDSEEKKEYIQ</sequence>